<comment type="function">
    <text evidence="1">Located at the top of the head of the 30S subunit, it contacts several helices of the 16S rRNA. In the 70S ribosome it contacts the 23S rRNA (bridge B1a) and protein L5 of the 50S subunit (bridge B1b), connecting the 2 subunits; these bridges are implicated in subunit movement. Contacts the tRNAs in the A and P-sites.</text>
</comment>
<comment type="subunit">
    <text evidence="1">Part of the 30S ribosomal subunit. Forms a loose heterodimer with protein S19. Forms two bridges to the 50S subunit in the 70S ribosome.</text>
</comment>
<comment type="similarity">
    <text evidence="1">Belongs to the universal ribosomal protein uS13 family.</text>
</comment>
<accession>Q9RDV8</accession>
<protein>
    <recommendedName>
        <fullName evidence="1">Small ribosomal subunit protein uS13</fullName>
    </recommendedName>
    <alternativeName>
        <fullName evidence="3">30S ribosomal protein S13</fullName>
    </alternativeName>
</protein>
<proteinExistence type="inferred from homology"/>
<organism>
    <name type="scientific">Mycoplasmoides gallisepticum (strain R(low / passage 15 / clone 2))</name>
    <name type="common">Mycoplasma gallisepticum</name>
    <dbReference type="NCBI Taxonomy" id="710127"/>
    <lineage>
        <taxon>Bacteria</taxon>
        <taxon>Bacillati</taxon>
        <taxon>Mycoplasmatota</taxon>
        <taxon>Mycoplasmoidales</taxon>
        <taxon>Mycoplasmoidaceae</taxon>
        <taxon>Mycoplasmoides</taxon>
    </lineage>
</organism>
<feature type="chain" id="PRO_0000132107" description="Small ribosomal subunit protein uS13">
    <location>
        <begin position="1"/>
        <end position="124"/>
    </location>
</feature>
<feature type="region of interest" description="Disordered" evidence="2">
    <location>
        <begin position="92"/>
        <end position="124"/>
    </location>
</feature>
<feature type="compositionally biased region" description="Basic residues" evidence="2">
    <location>
        <begin position="92"/>
        <end position="117"/>
    </location>
</feature>
<name>RS13_MYCGA</name>
<reference key="1">
    <citation type="journal article" date="2002" name="FEMS Microbiol. Lett.">
        <title>Mycoplasma gallisepticum rpoA gene cluster.</title>
        <authorList>
            <person name="Skamrov A.V."/>
            <person name="Feoktistova E.S."/>
            <person name="Gol'dman M.A."/>
            <person name="Bibilashvili R.S."/>
        </authorList>
    </citation>
    <scope>NUCLEOTIDE SEQUENCE [GENOMIC DNA]</scope>
    <source>
        <strain>A5969Var.B</strain>
    </source>
</reference>
<reference key="2">
    <citation type="journal article" date="2003" name="Microbiology">
        <title>The complete genome sequence of the avian pathogen Mycoplasma gallisepticum strain R(low).</title>
        <authorList>
            <person name="Papazisi L."/>
            <person name="Gorton T.S."/>
            <person name="Kutish G."/>
            <person name="Markham P.F."/>
            <person name="Browning G.F."/>
            <person name="Nguyen D.K."/>
            <person name="Swartzell S."/>
            <person name="Madan A."/>
            <person name="Mahairas G."/>
            <person name="Geary S.J."/>
        </authorList>
    </citation>
    <scope>NUCLEOTIDE SEQUENCE [LARGE SCALE GENOMIC DNA]</scope>
    <source>
        <strain>R(low / passage 15 / clone 2)</strain>
    </source>
</reference>
<gene>
    <name evidence="1" type="primary">rpsM</name>
    <name evidence="1" type="synonym">rps13</name>
    <name type="ordered locus">MYCGA6300</name>
    <name type="ORF">MGA_0447</name>
</gene>
<keyword id="KW-1185">Reference proteome</keyword>
<keyword id="KW-0687">Ribonucleoprotein</keyword>
<keyword id="KW-0689">Ribosomal protein</keyword>
<keyword id="KW-0694">RNA-binding</keyword>
<keyword id="KW-0699">rRNA-binding</keyword>
<keyword id="KW-0820">tRNA-binding</keyword>
<dbReference type="EMBL" id="L35043">
    <property type="protein sequence ID" value="AAF19041.1"/>
    <property type="molecule type" value="Genomic_DNA"/>
</dbReference>
<dbReference type="EMBL" id="AE015450">
    <property type="protein sequence ID" value="AAP56980.1"/>
    <property type="molecule type" value="Genomic_DNA"/>
</dbReference>
<dbReference type="RefSeq" id="WP_011113889.1">
    <property type="nucleotide sequence ID" value="NC_004829.2"/>
</dbReference>
<dbReference type="SMR" id="Q9RDV8"/>
<dbReference type="GeneID" id="93510466"/>
<dbReference type="KEGG" id="mga:MGA_0447"/>
<dbReference type="HOGENOM" id="CLU_103849_1_2_14"/>
<dbReference type="OrthoDB" id="9803610at2"/>
<dbReference type="Proteomes" id="UP000001418">
    <property type="component" value="Chromosome"/>
</dbReference>
<dbReference type="GO" id="GO:0005829">
    <property type="term" value="C:cytosol"/>
    <property type="evidence" value="ECO:0007669"/>
    <property type="project" value="TreeGrafter"/>
</dbReference>
<dbReference type="GO" id="GO:0015935">
    <property type="term" value="C:small ribosomal subunit"/>
    <property type="evidence" value="ECO:0007669"/>
    <property type="project" value="TreeGrafter"/>
</dbReference>
<dbReference type="GO" id="GO:0019843">
    <property type="term" value="F:rRNA binding"/>
    <property type="evidence" value="ECO:0007669"/>
    <property type="project" value="UniProtKB-UniRule"/>
</dbReference>
<dbReference type="GO" id="GO:0003735">
    <property type="term" value="F:structural constituent of ribosome"/>
    <property type="evidence" value="ECO:0007669"/>
    <property type="project" value="InterPro"/>
</dbReference>
<dbReference type="GO" id="GO:0000049">
    <property type="term" value="F:tRNA binding"/>
    <property type="evidence" value="ECO:0007669"/>
    <property type="project" value="UniProtKB-UniRule"/>
</dbReference>
<dbReference type="GO" id="GO:0006412">
    <property type="term" value="P:translation"/>
    <property type="evidence" value="ECO:0007669"/>
    <property type="project" value="UniProtKB-UniRule"/>
</dbReference>
<dbReference type="FunFam" id="1.10.8.50:FF:000001">
    <property type="entry name" value="30S ribosomal protein S13"/>
    <property type="match status" value="1"/>
</dbReference>
<dbReference type="FunFam" id="4.10.910.10:FF:000001">
    <property type="entry name" value="30S ribosomal protein S13"/>
    <property type="match status" value="1"/>
</dbReference>
<dbReference type="Gene3D" id="1.10.8.50">
    <property type="match status" value="1"/>
</dbReference>
<dbReference type="Gene3D" id="4.10.910.10">
    <property type="entry name" value="30s ribosomal protein s13, domain 2"/>
    <property type="match status" value="1"/>
</dbReference>
<dbReference type="HAMAP" id="MF_01315">
    <property type="entry name" value="Ribosomal_uS13"/>
    <property type="match status" value="1"/>
</dbReference>
<dbReference type="InterPro" id="IPR027437">
    <property type="entry name" value="Rbsml_uS13_C"/>
</dbReference>
<dbReference type="InterPro" id="IPR001892">
    <property type="entry name" value="Ribosomal_uS13"/>
</dbReference>
<dbReference type="InterPro" id="IPR010979">
    <property type="entry name" value="Ribosomal_uS13-like_H2TH"/>
</dbReference>
<dbReference type="InterPro" id="IPR019980">
    <property type="entry name" value="Ribosomal_uS13_bac-type"/>
</dbReference>
<dbReference type="InterPro" id="IPR018269">
    <property type="entry name" value="Ribosomal_uS13_CS"/>
</dbReference>
<dbReference type="NCBIfam" id="TIGR03631">
    <property type="entry name" value="uS13_bact"/>
    <property type="match status" value="1"/>
</dbReference>
<dbReference type="PANTHER" id="PTHR10871">
    <property type="entry name" value="30S RIBOSOMAL PROTEIN S13/40S RIBOSOMAL PROTEIN S18"/>
    <property type="match status" value="1"/>
</dbReference>
<dbReference type="PANTHER" id="PTHR10871:SF1">
    <property type="entry name" value="SMALL RIBOSOMAL SUBUNIT PROTEIN US13M"/>
    <property type="match status" value="1"/>
</dbReference>
<dbReference type="Pfam" id="PF00416">
    <property type="entry name" value="Ribosomal_S13"/>
    <property type="match status" value="1"/>
</dbReference>
<dbReference type="PIRSF" id="PIRSF002134">
    <property type="entry name" value="Ribosomal_S13"/>
    <property type="match status" value="1"/>
</dbReference>
<dbReference type="SUPFAM" id="SSF46946">
    <property type="entry name" value="S13-like H2TH domain"/>
    <property type="match status" value="1"/>
</dbReference>
<dbReference type="PROSITE" id="PS00646">
    <property type="entry name" value="RIBOSOMAL_S13_1"/>
    <property type="match status" value="1"/>
</dbReference>
<dbReference type="PROSITE" id="PS50159">
    <property type="entry name" value="RIBOSOMAL_S13_2"/>
    <property type="match status" value="1"/>
</dbReference>
<evidence type="ECO:0000255" key="1">
    <source>
        <dbReference type="HAMAP-Rule" id="MF_01315"/>
    </source>
</evidence>
<evidence type="ECO:0000256" key="2">
    <source>
        <dbReference type="SAM" id="MobiDB-lite"/>
    </source>
</evidence>
<evidence type="ECO:0000305" key="3"/>
<sequence>MARILGIDIPNNKRVEISLTYIYGIGKPRAQEILRKAKIDFNKRVKDLSDEELALIRSVASTYVLEGDLRRDVALNIKRLMEVGSYAGLRHRRGLPVRGQRTKSNARTRKGPRKTVANKKIESK</sequence>